<keyword id="KW-0963">Cytoplasm</keyword>
<keyword id="KW-0489">Methyltransferase</keyword>
<keyword id="KW-1185">Reference proteome</keyword>
<keyword id="KW-0949">S-adenosyl-L-methionine</keyword>
<keyword id="KW-0808">Transferase</keyword>
<keyword id="KW-0819">tRNA processing</keyword>
<accession>Q8PBC1</accession>
<dbReference type="EC" id="2.1.1.228"/>
<dbReference type="EMBL" id="AE008922">
    <property type="protein sequence ID" value="AAM40499.1"/>
    <property type="molecule type" value="Genomic_DNA"/>
</dbReference>
<dbReference type="RefSeq" id="NP_636575.1">
    <property type="nucleotide sequence ID" value="NC_003902.1"/>
</dbReference>
<dbReference type="RefSeq" id="WP_011036398.1">
    <property type="nucleotide sequence ID" value="NC_003902.1"/>
</dbReference>
<dbReference type="SMR" id="Q8PBC1"/>
<dbReference type="STRING" id="190485.XCC1201"/>
<dbReference type="EnsemblBacteria" id="AAM40499">
    <property type="protein sequence ID" value="AAM40499"/>
    <property type="gene ID" value="XCC1201"/>
</dbReference>
<dbReference type="KEGG" id="xcc:XCC1201"/>
<dbReference type="PATRIC" id="fig|190485.4.peg.1290"/>
<dbReference type="eggNOG" id="COG0336">
    <property type="taxonomic scope" value="Bacteria"/>
</dbReference>
<dbReference type="HOGENOM" id="CLU_047363_0_1_6"/>
<dbReference type="OrthoDB" id="9807416at2"/>
<dbReference type="Proteomes" id="UP000001010">
    <property type="component" value="Chromosome"/>
</dbReference>
<dbReference type="GO" id="GO:0005829">
    <property type="term" value="C:cytosol"/>
    <property type="evidence" value="ECO:0000318"/>
    <property type="project" value="GO_Central"/>
</dbReference>
<dbReference type="GO" id="GO:0052906">
    <property type="term" value="F:tRNA (guanine(37)-N1)-methyltransferase activity"/>
    <property type="evidence" value="ECO:0000318"/>
    <property type="project" value="GO_Central"/>
</dbReference>
<dbReference type="GO" id="GO:0002939">
    <property type="term" value="P:tRNA N1-guanine methylation"/>
    <property type="evidence" value="ECO:0000318"/>
    <property type="project" value="GO_Central"/>
</dbReference>
<dbReference type="CDD" id="cd18080">
    <property type="entry name" value="TrmD-like"/>
    <property type="match status" value="1"/>
</dbReference>
<dbReference type="FunFam" id="1.10.1270.20:FF:000001">
    <property type="entry name" value="tRNA (guanine-N(1)-)-methyltransferase"/>
    <property type="match status" value="1"/>
</dbReference>
<dbReference type="FunFam" id="3.40.1280.10:FF:000001">
    <property type="entry name" value="tRNA (guanine-N(1)-)-methyltransferase"/>
    <property type="match status" value="1"/>
</dbReference>
<dbReference type="Gene3D" id="3.40.1280.10">
    <property type="match status" value="1"/>
</dbReference>
<dbReference type="Gene3D" id="1.10.1270.20">
    <property type="entry name" value="tRNA(m1g37)methyltransferase, domain 2"/>
    <property type="match status" value="1"/>
</dbReference>
<dbReference type="HAMAP" id="MF_00605">
    <property type="entry name" value="TrmD"/>
    <property type="match status" value="1"/>
</dbReference>
<dbReference type="InterPro" id="IPR029028">
    <property type="entry name" value="Alpha/beta_knot_MTases"/>
</dbReference>
<dbReference type="InterPro" id="IPR023148">
    <property type="entry name" value="tRNA_m1G_MeTrfase_C_sf"/>
</dbReference>
<dbReference type="InterPro" id="IPR002649">
    <property type="entry name" value="tRNA_m1G_MeTrfase_TrmD"/>
</dbReference>
<dbReference type="InterPro" id="IPR029026">
    <property type="entry name" value="tRNA_m1G_MTases_N"/>
</dbReference>
<dbReference type="InterPro" id="IPR016009">
    <property type="entry name" value="tRNA_MeTrfase_TRMD/TRM10"/>
</dbReference>
<dbReference type="NCBIfam" id="NF000648">
    <property type="entry name" value="PRK00026.1"/>
    <property type="match status" value="1"/>
</dbReference>
<dbReference type="NCBIfam" id="TIGR00088">
    <property type="entry name" value="trmD"/>
    <property type="match status" value="1"/>
</dbReference>
<dbReference type="PANTHER" id="PTHR46417">
    <property type="entry name" value="TRNA (GUANINE-N(1)-)-METHYLTRANSFERASE"/>
    <property type="match status" value="1"/>
</dbReference>
<dbReference type="PANTHER" id="PTHR46417:SF1">
    <property type="entry name" value="TRNA (GUANINE-N(1)-)-METHYLTRANSFERASE"/>
    <property type="match status" value="1"/>
</dbReference>
<dbReference type="Pfam" id="PF01746">
    <property type="entry name" value="tRNA_m1G_MT"/>
    <property type="match status" value="1"/>
</dbReference>
<dbReference type="PIRSF" id="PIRSF000386">
    <property type="entry name" value="tRNA_mtase"/>
    <property type="match status" value="1"/>
</dbReference>
<dbReference type="SUPFAM" id="SSF75217">
    <property type="entry name" value="alpha/beta knot"/>
    <property type="match status" value="1"/>
</dbReference>
<reference key="1">
    <citation type="journal article" date="2002" name="Nature">
        <title>Comparison of the genomes of two Xanthomonas pathogens with differing host specificities.</title>
        <authorList>
            <person name="da Silva A.C.R."/>
            <person name="Ferro J.A."/>
            <person name="Reinach F.C."/>
            <person name="Farah C.S."/>
            <person name="Furlan L.R."/>
            <person name="Quaggio R.B."/>
            <person name="Monteiro-Vitorello C.B."/>
            <person name="Van Sluys M.A."/>
            <person name="Almeida N.F. Jr."/>
            <person name="Alves L.M.C."/>
            <person name="do Amaral A.M."/>
            <person name="Bertolini M.C."/>
            <person name="Camargo L.E.A."/>
            <person name="Camarotte G."/>
            <person name="Cannavan F."/>
            <person name="Cardozo J."/>
            <person name="Chambergo F."/>
            <person name="Ciapina L.P."/>
            <person name="Cicarelli R.M.B."/>
            <person name="Coutinho L.L."/>
            <person name="Cursino-Santos J.R."/>
            <person name="El-Dorry H."/>
            <person name="Faria J.B."/>
            <person name="Ferreira A.J.S."/>
            <person name="Ferreira R.C.C."/>
            <person name="Ferro M.I.T."/>
            <person name="Formighieri E.F."/>
            <person name="Franco M.C."/>
            <person name="Greggio C.C."/>
            <person name="Gruber A."/>
            <person name="Katsuyama A.M."/>
            <person name="Kishi L.T."/>
            <person name="Leite R.P."/>
            <person name="Lemos E.G.M."/>
            <person name="Lemos M.V.F."/>
            <person name="Locali E.C."/>
            <person name="Machado M.A."/>
            <person name="Madeira A.M.B.N."/>
            <person name="Martinez-Rossi N.M."/>
            <person name="Martins E.C."/>
            <person name="Meidanis J."/>
            <person name="Menck C.F.M."/>
            <person name="Miyaki C.Y."/>
            <person name="Moon D.H."/>
            <person name="Moreira L.M."/>
            <person name="Novo M.T.M."/>
            <person name="Okura V.K."/>
            <person name="Oliveira M.C."/>
            <person name="Oliveira V.R."/>
            <person name="Pereira H.A."/>
            <person name="Rossi A."/>
            <person name="Sena J.A.D."/>
            <person name="Silva C."/>
            <person name="de Souza R.F."/>
            <person name="Spinola L.A.F."/>
            <person name="Takita M.A."/>
            <person name="Tamura R.E."/>
            <person name="Teixeira E.C."/>
            <person name="Tezza R.I.D."/>
            <person name="Trindade dos Santos M."/>
            <person name="Truffi D."/>
            <person name="Tsai S.M."/>
            <person name="White F.F."/>
            <person name="Setubal J.C."/>
            <person name="Kitajima J.P."/>
        </authorList>
    </citation>
    <scope>NUCLEOTIDE SEQUENCE [LARGE SCALE GENOMIC DNA]</scope>
    <source>
        <strain>ATCC 33913 / DSM 3586 / NCPPB 528 / LMG 568 / P 25</strain>
    </source>
</reference>
<evidence type="ECO:0000250" key="1"/>
<evidence type="ECO:0000305" key="2"/>
<organism>
    <name type="scientific">Xanthomonas campestris pv. campestris (strain ATCC 33913 / DSM 3586 / NCPPB 528 / LMG 568 / P 25)</name>
    <dbReference type="NCBI Taxonomy" id="190485"/>
    <lineage>
        <taxon>Bacteria</taxon>
        <taxon>Pseudomonadati</taxon>
        <taxon>Pseudomonadota</taxon>
        <taxon>Gammaproteobacteria</taxon>
        <taxon>Lysobacterales</taxon>
        <taxon>Lysobacteraceae</taxon>
        <taxon>Xanthomonas</taxon>
    </lineage>
</organism>
<gene>
    <name type="primary">trmD</name>
    <name type="ordered locus">XCC1201</name>
</gene>
<protein>
    <recommendedName>
        <fullName>tRNA (guanine-N(1)-)-methyltransferase</fullName>
        <ecNumber>2.1.1.228</ecNumber>
    </recommendedName>
    <alternativeName>
        <fullName>M1G-methyltransferase</fullName>
    </alternativeName>
    <alternativeName>
        <fullName>tRNA [GM37] methyltransferase</fullName>
    </alternativeName>
</protein>
<sequence length="252" mass="27985">MRIDVISLFPEFIAQCAAFGVVGRAQERGLLELKGWNPRDHAQGNYRRVDDRPFGGGPGMVMLIEPLRACLEVAQAADARPAPVIYLSPQGRPLTQPLARELAQLPRMVLLCGRYEGVDERFLDQAVDMEISIGDYVLSGGELGAAVLVDVVTRLQDGVLNDAESAAQDSFEGPQGLLDCPHYSHPSSHAWGDVPEVLRSGNHGAIARWRRQQSLGRTWLRRPELLDEATLDKQDRRLLEEFRRELAPGDEK</sequence>
<feature type="chain" id="PRO_0000060501" description="tRNA (guanine-N(1)-)-methyltransferase">
    <location>
        <begin position="1"/>
        <end position="252"/>
    </location>
</feature>
<feature type="binding site" evidence="1">
    <location>
        <position position="113"/>
    </location>
    <ligand>
        <name>S-adenosyl-L-methionine</name>
        <dbReference type="ChEBI" id="CHEBI:59789"/>
    </ligand>
</feature>
<feature type="binding site" evidence="1">
    <location>
        <begin position="133"/>
        <end position="138"/>
    </location>
    <ligand>
        <name>S-adenosyl-L-methionine</name>
        <dbReference type="ChEBI" id="CHEBI:59789"/>
    </ligand>
</feature>
<name>TRMD_XANCP</name>
<comment type="function">
    <text evidence="1">Specifically methylates guanosine-37 in various tRNAs.</text>
</comment>
<comment type="catalytic activity">
    <reaction>
        <text>guanosine(37) in tRNA + S-adenosyl-L-methionine = N(1)-methylguanosine(37) in tRNA + S-adenosyl-L-homocysteine + H(+)</text>
        <dbReference type="Rhea" id="RHEA:36899"/>
        <dbReference type="Rhea" id="RHEA-COMP:10145"/>
        <dbReference type="Rhea" id="RHEA-COMP:10147"/>
        <dbReference type="ChEBI" id="CHEBI:15378"/>
        <dbReference type="ChEBI" id="CHEBI:57856"/>
        <dbReference type="ChEBI" id="CHEBI:59789"/>
        <dbReference type="ChEBI" id="CHEBI:73542"/>
        <dbReference type="ChEBI" id="CHEBI:74269"/>
        <dbReference type="EC" id="2.1.1.228"/>
    </reaction>
</comment>
<comment type="subunit">
    <text evidence="1">Homodimer.</text>
</comment>
<comment type="subcellular location">
    <subcellularLocation>
        <location evidence="2">Cytoplasm</location>
    </subcellularLocation>
</comment>
<comment type="similarity">
    <text evidence="2">Belongs to the RNA methyltransferase TrmD family.</text>
</comment>
<proteinExistence type="inferred from homology"/>